<name>LEUC_ACET2</name>
<reference key="1">
    <citation type="submission" date="2007-02" db="EMBL/GenBank/DDBJ databases">
        <title>Complete sequence of Clostridium thermocellum ATCC 27405.</title>
        <authorList>
            <consortium name="US DOE Joint Genome Institute"/>
            <person name="Copeland A."/>
            <person name="Lucas S."/>
            <person name="Lapidus A."/>
            <person name="Barry K."/>
            <person name="Detter J.C."/>
            <person name="Glavina del Rio T."/>
            <person name="Hammon N."/>
            <person name="Israni S."/>
            <person name="Dalin E."/>
            <person name="Tice H."/>
            <person name="Pitluck S."/>
            <person name="Chertkov O."/>
            <person name="Brettin T."/>
            <person name="Bruce D."/>
            <person name="Han C."/>
            <person name="Tapia R."/>
            <person name="Gilna P."/>
            <person name="Schmutz J."/>
            <person name="Larimer F."/>
            <person name="Land M."/>
            <person name="Hauser L."/>
            <person name="Kyrpides N."/>
            <person name="Mikhailova N."/>
            <person name="Wu J.H.D."/>
            <person name="Newcomb M."/>
            <person name="Richardson P."/>
        </authorList>
    </citation>
    <scope>NUCLEOTIDE SEQUENCE [LARGE SCALE GENOMIC DNA]</scope>
    <source>
        <strain>ATCC 27405 / DSM 1237 / JCM 9322 / NBRC 103400 / NCIMB 10682 / NRRL B-4536 / VPI 7372</strain>
    </source>
</reference>
<organism>
    <name type="scientific">Acetivibrio thermocellus (strain ATCC 27405 / DSM 1237 / JCM 9322 / NBRC 103400 / NCIMB 10682 / NRRL B-4536 / VPI 7372)</name>
    <name type="common">Clostridium thermocellum</name>
    <dbReference type="NCBI Taxonomy" id="203119"/>
    <lineage>
        <taxon>Bacteria</taxon>
        <taxon>Bacillati</taxon>
        <taxon>Bacillota</taxon>
        <taxon>Clostridia</taxon>
        <taxon>Eubacteriales</taxon>
        <taxon>Oscillospiraceae</taxon>
        <taxon>Acetivibrio</taxon>
    </lineage>
</organism>
<accession>A3DHI4</accession>
<dbReference type="EC" id="4.2.1.33" evidence="1"/>
<dbReference type="EMBL" id="CP000568">
    <property type="protein sequence ID" value="ABN53413.1"/>
    <property type="molecule type" value="Genomic_DNA"/>
</dbReference>
<dbReference type="RefSeq" id="WP_003513635.1">
    <property type="nucleotide sequence ID" value="NC_009012.1"/>
</dbReference>
<dbReference type="SMR" id="A3DHI4"/>
<dbReference type="STRING" id="203119.Cthe_2211"/>
<dbReference type="GeneID" id="35803041"/>
<dbReference type="KEGG" id="cth:Cthe_2211"/>
<dbReference type="eggNOG" id="COG0065">
    <property type="taxonomic scope" value="Bacteria"/>
</dbReference>
<dbReference type="HOGENOM" id="CLU_006714_3_4_9"/>
<dbReference type="OrthoDB" id="9802769at2"/>
<dbReference type="UniPathway" id="UPA00048">
    <property type="reaction ID" value="UER00071"/>
</dbReference>
<dbReference type="Proteomes" id="UP000002145">
    <property type="component" value="Chromosome"/>
</dbReference>
<dbReference type="GO" id="GO:0003861">
    <property type="term" value="F:3-isopropylmalate dehydratase activity"/>
    <property type="evidence" value="ECO:0007669"/>
    <property type="project" value="UniProtKB-UniRule"/>
</dbReference>
<dbReference type="GO" id="GO:0051539">
    <property type="term" value="F:4 iron, 4 sulfur cluster binding"/>
    <property type="evidence" value="ECO:0007669"/>
    <property type="project" value="UniProtKB-KW"/>
</dbReference>
<dbReference type="GO" id="GO:0046872">
    <property type="term" value="F:metal ion binding"/>
    <property type="evidence" value="ECO:0007669"/>
    <property type="project" value="UniProtKB-KW"/>
</dbReference>
<dbReference type="GO" id="GO:0009098">
    <property type="term" value="P:L-leucine biosynthetic process"/>
    <property type="evidence" value="ECO:0007669"/>
    <property type="project" value="UniProtKB-UniRule"/>
</dbReference>
<dbReference type="CDD" id="cd01583">
    <property type="entry name" value="IPMI"/>
    <property type="match status" value="1"/>
</dbReference>
<dbReference type="Gene3D" id="3.30.499.10">
    <property type="entry name" value="Aconitase, domain 3"/>
    <property type="match status" value="2"/>
</dbReference>
<dbReference type="HAMAP" id="MF_01027">
    <property type="entry name" value="LeuC_type2"/>
    <property type="match status" value="1"/>
</dbReference>
<dbReference type="InterPro" id="IPR015931">
    <property type="entry name" value="Acnase/IPM_dHydase_lsu_aba_1/3"/>
</dbReference>
<dbReference type="InterPro" id="IPR001030">
    <property type="entry name" value="Acoase/IPM_deHydtase_lsu_aba"/>
</dbReference>
<dbReference type="InterPro" id="IPR018136">
    <property type="entry name" value="Aconitase_4Fe-4S_BS"/>
</dbReference>
<dbReference type="InterPro" id="IPR036008">
    <property type="entry name" value="Aconitase_4Fe-4S_dom"/>
</dbReference>
<dbReference type="InterPro" id="IPR011826">
    <property type="entry name" value="HAcnase/IPMdehydase_lsu_prok"/>
</dbReference>
<dbReference type="InterPro" id="IPR006251">
    <property type="entry name" value="Homoacnase/IPMdehydase_lsu"/>
</dbReference>
<dbReference type="InterPro" id="IPR050067">
    <property type="entry name" value="IPM_dehydratase_rel_enz"/>
</dbReference>
<dbReference type="InterPro" id="IPR033941">
    <property type="entry name" value="IPMI_cat"/>
</dbReference>
<dbReference type="InterPro" id="IPR011823">
    <property type="entry name" value="IsopropMal_deHydtase_lsu_bac"/>
</dbReference>
<dbReference type="NCBIfam" id="TIGR01343">
    <property type="entry name" value="hacA_fam"/>
    <property type="match status" value="1"/>
</dbReference>
<dbReference type="NCBIfam" id="TIGR02086">
    <property type="entry name" value="IPMI_arch"/>
    <property type="match status" value="1"/>
</dbReference>
<dbReference type="NCBIfam" id="TIGR02083">
    <property type="entry name" value="LEU2"/>
    <property type="match status" value="1"/>
</dbReference>
<dbReference type="NCBIfam" id="NF001614">
    <property type="entry name" value="PRK00402.1"/>
    <property type="match status" value="1"/>
</dbReference>
<dbReference type="PANTHER" id="PTHR43822:SF16">
    <property type="entry name" value="3-ISOPROPYLMALATE DEHYDRATASE LARGE SUBUNIT 2"/>
    <property type="match status" value="1"/>
</dbReference>
<dbReference type="PANTHER" id="PTHR43822">
    <property type="entry name" value="HOMOACONITASE, MITOCHONDRIAL-RELATED"/>
    <property type="match status" value="1"/>
</dbReference>
<dbReference type="Pfam" id="PF00330">
    <property type="entry name" value="Aconitase"/>
    <property type="match status" value="2"/>
</dbReference>
<dbReference type="PRINTS" id="PR00415">
    <property type="entry name" value="ACONITASE"/>
</dbReference>
<dbReference type="SUPFAM" id="SSF53732">
    <property type="entry name" value="Aconitase iron-sulfur domain"/>
    <property type="match status" value="1"/>
</dbReference>
<dbReference type="PROSITE" id="PS00450">
    <property type="entry name" value="ACONITASE_1"/>
    <property type="match status" value="1"/>
</dbReference>
<dbReference type="PROSITE" id="PS01244">
    <property type="entry name" value="ACONITASE_2"/>
    <property type="match status" value="1"/>
</dbReference>
<keyword id="KW-0004">4Fe-4S</keyword>
<keyword id="KW-0028">Amino-acid biosynthesis</keyword>
<keyword id="KW-0100">Branched-chain amino acid biosynthesis</keyword>
<keyword id="KW-0408">Iron</keyword>
<keyword id="KW-0411">Iron-sulfur</keyword>
<keyword id="KW-0432">Leucine biosynthesis</keyword>
<keyword id="KW-0456">Lyase</keyword>
<keyword id="KW-0479">Metal-binding</keyword>
<keyword id="KW-1185">Reference proteome</keyword>
<proteinExistence type="inferred from homology"/>
<feature type="chain" id="PRO_1000063644" description="3-isopropylmalate dehydratase large subunit">
    <location>
        <begin position="1"/>
        <end position="419"/>
    </location>
</feature>
<feature type="binding site" evidence="1">
    <location>
        <position position="300"/>
    </location>
    <ligand>
        <name>[4Fe-4S] cluster</name>
        <dbReference type="ChEBI" id="CHEBI:49883"/>
    </ligand>
</feature>
<feature type="binding site" evidence="1">
    <location>
        <position position="360"/>
    </location>
    <ligand>
        <name>[4Fe-4S] cluster</name>
        <dbReference type="ChEBI" id="CHEBI:49883"/>
    </ligand>
</feature>
<feature type="binding site" evidence="1">
    <location>
        <position position="363"/>
    </location>
    <ligand>
        <name>[4Fe-4S] cluster</name>
        <dbReference type="ChEBI" id="CHEBI:49883"/>
    </ligand>
</feature>
<sequence length="419" mass="45151">MGMTMTQKILADHAGLDKVSPGQLIKAKLDMVLGNDITTPVAVKEFRKIGVNKVFDVNKIAIVPDHFTPNKDIKSAEQVKFIREFAREMGIVNFFEVGQMGVEHALLPEKGLVVPGDVVIGADSHTCTYGALGAFSTGIGSTDMAAGMATGEAWFKVPEAMKFVLKGKPGKWVSGKDIILHIIGMIGVDGALYRSMEFTGDGVAHLSMDDRFAMANMAIEAGAKNGIFEVDEKTIEYVKEHSTRQYKVYKADEDAEYVATYEIDLSQVKPTVAFPHLPSNTRTIDNVGNIKIDQVVIGSCTNGRIEDLRVAAEVLKGRKVHKDVRCIIIPATQKIWKQAMNEGLFDIFIDAGAAVSTPTCGPCLGGHMGILAKGERAVATTNRNFVGRMGHPESEIYLASPAVAAASAVLGRIGSPDEL</sequence>
<evidence type="ECO:0000255" key="1">
    <source>
        <dbReference type="HAMAP-Rule" id="MF_01027"/>
    </source>
</evidence>
<protein>
    <recommendedName>
        <fullName evidence="1">3-isopropylmalate dehydratase large subunit</fullName>
        <ecNumber evidence="1">4.2.1.33</ecNumber>
    </recommendedName>
    <alternativeName>
        <fullName evidence="1">Alpha-IPM isomerase</fullName>
        <shortName evidence="1">IPMI</shortName>
    </alternativeName>
    <alternativeName>
        <fullName evidence="1">Isopropylmalate isomerase</fullName>
    </alternativeName>
</protein>
<comment type="function">
    <text evidence="1">Catalyzes the isomerization between 2-isopropylmalate and 3-isopropylmalate, via the formation of 2-isopropylmaleate.</text>
</comment>
<comment type="catalytic activity">
    <reaction evidence="1">
        <text>(2R,3S)-3-isopropylmalate = (2S)-2-isopropylmalate</text>
        <dbReference type="Rhea" id="RHEA:32287"/>
        <dbReference type="ChEBI" id="CHEBI:1178"/>
        <dbReference type="ChEBI" id="CHEBI:35121"/>
        <dbReference type="EC" id="4.2.1.33"/>
    </reaction>
</comment>
<comment type="cofactor">
    <cofactor evidence="1">
        <name>[4Fe-4S] cluster</name>
        <dbReference type="ChEBI" id="CHEBI:49883"/>
    </cofactor>
    <text evidence="1">Binds 1 [4Fe-4S] cluster per subunit.</text>
</comment>
<comment type="pathway">
    <text evidence="1">Amino-acid biosynthesis; L-leucine biosynthesis; L-leucine from 3-methyl-2-oxobutanoate: step 2/4.</text>
</comment>
<comment type="subunit">
    <text evidence="1">Heterodimer of LeuC and LeuD.</text>
</comment>
<comment type="similarity">
    <text evidence="1">Belongs to the aconitase/IPM isomerase family. LeuC type 2 subfamily.</text>
</comment>
<gene>
    <name evidence="1" type="primary">leuC</name>
    <name type="ordered locus">Cthe_2211</name>
</gene>